<organism>
    <name type="scientific">Prochlorococcus marinus (strain SARG / CCMP1375 / SS120)</name>
    <dbReference type="NCBI Taxonomy" id="167539"/>
    <lineage>
        <taxon>Bacteria</taxon>
        <taxon>Bacillati</taxon>
        <taxon>Cyanobacteriota</taxon>
        <taxon>Cyanophyceae</taxon>
        <taxon>Synechococcales</taxon>
        <taxon>Prochlorococcaceae</taxon>
        <taxon>Prochlorococcus</taxon>
    </lineage>
</organism>
<proteinExistence type="inferred from homology"/>
<evidence type="ECO:0000255" key="1">
    <source>
        <dbReference type="HAMAP-Rule" id="MF_00123"/>
    </source>
</evidence>
<reference key="1">
    <citation type="journal article" date="2003" name="Proc. Natl. Acad. Sci. U.S.A.">
        <title>Genome sequence of the cyanobacterium Prochlorococcus marinus SS120, a nearly minimal oxyphototrophic genome.</title>
        <authorList>
            <person name="Dufresne A."/>
            <person name="Salanoubat M."/>
            <person name="Partensky F."/>
            <person name="Artiguenave F."/>
            <person name="Axmann I.M."/>
            <person name="Barbe V."/>
            <person name="Duprat S."/>
            <person name="Galperin M.Y."/>
            <person name="Koonin E.V."/>
            <person name="Le Gall F."/>
            <person name="Makarova K.S."/>
            <person name="Ostrowski M."/>
            <person name="Oztas S."/>
            <person name="Robert C."/>
            <person name="Rogozin I.B."/>
            <person name="Scanlan D.J."/>
            <person name="Tandeau de Marsac N."/>
            <person name="Weissenbach J."/>
            <person name="Wincker P."/>
            <person name="Wolf Y.I."/>
            <person name="Hess W.R."/>
        </authorList>
    </citation>
    <scope>NUCLEOTIDE SEQUENCE [LARGE SCALE GENOMIC DNA]</scope>
    <source>
        <strain>SARG / CCMP1375 / SS120</strain>
    </source>
</reference>
<comment type="catalytic activity">
    <reaction evidence="1">
        <text>tRNA(Arg) + L-arginine + ATP = L-arginyl-tRNA(Arg) + AMP + diphosphate</text>
        <dbReference type="Rhea" id="RHEA:20301"/>
        <dbReference type="Rhea" id="RHEA-COMP:9658"/>
        <dbReference type="Rhea" id="RHEA-COMP:9673"/>
        <dbReference type="ChEBI" id="CHEBI:30616"/>
        <dbReference type="ChEBI" id="CHEBI:32682"/>
        <dbReference type="ChEBI" id="CHEBI:33019"/>
        <dbReference type="ChEBI" id="CHEBI:78442"/>
        <dbReference type="ChEBI" id="CHEBI:78513"/>
        <dbReference type="ChEBI" id="CHEBI:456215"/>
        <dbReference type="EC" id="6.1.1.19"/>
    </reaction>
</comment>
<comment type="subunit">
    <text evidence="1">Monomer.</text>
</comment>
<comment type="subcellular location">
    <subcellularLocation>
        <location evidence="1">Cytoplasm</location>
    </subcellularLocation>
</comment>
<comment type="similarity">
    <text evidence="1">Belongs to the class-I aminoacyl-tRNA synthetase family.</text>
</comment>
<gene>
    <name evidence="1" type="primary">argS</name>
    <name type="ordered locus">Pro_0212</name>
</gene>
<feature type="chain" id="PRO_0000151589" description="Arginine--tRNA ligase">
    <location>
        <begin position="1"/>
        <end position="603"/>
    </location>
</feature>
<feature type="short sequence motif" description="'HIGH' region">
    <location>
        <begin position="143"/>
        <end position="153"/>
    </location>
</feature>
<name>SYR_PROMA</name>
<accession>Q7VE03</accession>
<protein>
    <recommendedName>
        <fullName evidence="1">Arginine--tRNA ligase</fullName>
        <ecNumber evidence="1">6.1.1.19</ecNumber>
    </recommendedName>
    <alternativeName>
        <fullName evidence="1">Arginyl-tRNA synthetase</fullName>
        <shortName evidence="1">ArgRS</shortName>
    </alternativeName>
</protein>
<keyword id="KW-0030">Aminoacyl-tRNA synthetase</keyword>
<keyword id="KW-0067">ATP-binding</keyword>
<keyword id="KW-0963">Cytoplasm</keyword>
<keyword id="KW-0436">Ligase</keyword>
<keyword id="KW-0547">Nucleotide-binding</keyword>
<keyword id="KW-0648">Protein biosynthesis</keyword>
<keyword id="KW-1185">Reference proteome</keyword>
<sequence>MYNIYKSLNQQVQRALNTAFPEAASQVKESGDFLNPQLVAATKPEFGDFQINGALALARIIKKSPRQIAEILIKQLESNEVFKAICLPPEIAGPGFINLTLQNTCLINEITSRLNDDLLGVPLVNDDEITKKLKPVIVDFSSPNIAKEMHVGHLRSTIIGDSIARILNYRGYKVIRLNHVGDWGTQFGMLITHLKEVAPKALTTANVINLGNLVEFYKKAKQRFDEDEYFQQCSRNEVVNLQRGNKESLKAWELLCEQSRKEFNKIYDRLKIEISERGESFYNPFLQGVIDDLTRSGLLVEDDGAKCVFLNGINGKDGNPLPLIIQKADGGFNYATTDLAAIRYRLKDQPDGDGAGRIIYVTDSGQANHFAGVFQVAKRAKWLPSSSRIEHVPFGLVQGEDGKKLKTRSGETVRLKDLLDEAISRAKLDIERRLNEENRKESQAFIEKVSNTIGIAAVKYADLSQNRITNYQFSFDRMLALQGNTAPYLLYAVVRIAGINRKGGDLHSSVNKLNFSEPQEWRLIRELLKFDEVIIAVEEELLPNRLCNYLFELSQVFNRFYDQIPVLKAEEPSRSCRLALCQLTGDTLKKGLNLLGISTLERM</sequence>
<dbReference type="EC" id="6.1.1.19" evidence="1"/>
<dbReference type="EMBL" id="AE017126">
    <property type="protein sequence ID" value="AAP99258.1"/>
    <property type="molecule type" value="Genomic_DNA"/>
</dbReference>
<dbReference type="RefSeq" id="NP_874606.1">
    <property type="nucleotide sequence ID" value="NC_005042.1"/>
</dbReference>
<dbReference type="RefSeq" id="WP_011124367.1">
    <property type="nucleotide sequence ID" value="NC_005042.1"/>
</dbReference>
<dbReference type="SMR" id="Q7VE03"/>
<dbReference type="STRING" id="167539.Pro_0212"/>
<dbReference type="EnsemblBacteria" id="AAP99258">
    <property type="protein sequence ID" value="AAP99258"/>
    <property type="gene ID" value="Pro_0212"/>
</dbReference>
<dbReference type="KEGG" id="pma:Pro_0212"/>
<dbReference type="PATRIC" id="fig|167539.5.peg.219"/>
<dbReference type="eggNOG" id="COG0018">
    <property type="taxonomic scope" value="Bacteria"/>
</dbReference>
<dbReference type="HOGENOM" id="CLU_006406_5_1_3"/>
<dbReference type="OrthoDB" id="9805987at2"/>
<dbReference type="Proteomes" id="UP000001420">
    <property type="component" value="Chromosome"/>
</dbReference>
<dbReference type="GO" id="GO:0005737">
    <property type="term" value="C:cytoplasm"/>
    <property type="evidence" value="ECO:0007669"/>
    <property type="project" value="UniProtKB-SubCell"/>
</dbReference>
<dbReference type="GO" id="GO:0004814">
    <property type="term" value="F:arginine-tRNA ligase activity"/>
    <property type="evidence" value="ECO:0007669"/>
    <property type="project" value="UniProtKB-UniRule"/>
</dbReference>
<dbReference type="GO" id="GO:0005524">
    <property type="term" value="F:ATP binding"/>
    <property type="evidence" value="ECO:0007669"/>
    <property type="project" value="UniProtKB-UniRule"/>
</dbReference>
<dbReference type="GO" id="GO:0006420">
    <property type="term" value="P:arginyl-tRNA aminoacylation"/>
    <property type="evidence" value="ECO:0007669"/>
    <property type="project" value="UniProtKB-UniRule"/>
</dbReference>
<dbReference type="CDD" id="cd07956">
    <property type="entry name" value="Anticodon_Ia_Arg"/>
    <property type="match status" value="1"/>
</dbReference>
<dbReference type="CDD" id="cd00671">
    <property type="entry name" value="ArgRS_core"/>
    <property type="match status" value="1"/>
</dbReference>
<dbReference type="FunFam" id="3.40.50.620:FF:000030">
    <property type="entry name" value="Arginine--tRNA ligase"/>
    <property type="match status" value="1"/>
</dbReference>
<dbReference type="FunFam" id="1.10.730.10:FF:000006">
    <property type="entry name" value="Arginyl-tRNA synthetase 2, mitochondrial"/>
    <property type="match status" value="1"/>
</dbReference>
<dbReference type="Gene3D" id="3.30.1360.70">
    <property type="entry name" value="Arginyl tRNA synthetase N-terminal domain"/>
    <property type="match status" value="1"/>
</dbReference>
<dbReference type="Gene3D" id="3.40.50.620">
    <property type="entry name" value="HUPs"/>
    <property type="match status" value="1"/>
</dbReference>
<dbReference type="Gene3D" id="1.10.730.10">
    <property type="entry name" value="Isoleucyl-tRNA Synthetase, Domain 1"/>
    <property type="match status" value="1"/>
</dbReference>
<dbReference type="HAMAP" id="MF_00123">
    <property type="entry name" value="Arg_tRNA_synth"/>
    <property type="match status" value="1"/>
</dbReference>
<dbReference type="InterPro" id="IPR001412">
    <property type="entry name" value="aa-tRNA-synth_I_CS"/>
</dbReference>
<dbReference type="InterPro" id="IPR001278">
    <property type="entry name" value="Arg-tRNA-ligase"/>
</dbReference>
<dbReference type="InterPro" id="IPR005148">
    <property type="entry name" value="Arg-tRNA-synth_N"/>
</dbReference>
<dbReference type="InterPro" id="IPR036695">
    <property type="entry name" value="Arg-tRNA-synth_N_sf"/>
</dbReference>
<dbReference type="InterPro" id="IPR035684">
    <property type="entry name" value="ArgRS_core"/>
</dbReference>
<dbReference type="InterPro" id="IPR008909">
    <property type="entry name" value="DALR_anticod-bd"/>
</dbReference>
<dbReference type="InterPro" id="IPR014729">
    <property type="entry name" value="Rossmann-like_a/b/a_fold"/>
</dbReference>
<dbReference type="InterPro" id="IPR009080">
    <property type="entry name" value="tRNAsynth_Ia_anticodon-bd"/>
</dbReference>
<dbReference type="NCBIfam" id="TIGR00456">
    <property type="entry name" value="argS"/>
    <property type="match status" value="1"/>
</dbReference>
<dbReference type="PANTHER" id="PTHR11956:SF5">
    <property type="entry name" value="ARGININE--TRNA LIGASE, CYTOPLASMIC"/>
    <property type="match status" value="1"/>
</dbReference>
<dbReference type="PANTHER" id="PTHR11956">
    <property type="entry name" value="ARGINYL-TRNA SYNTHETASE"/>
    <property type="match status" value="1"/>
</dbReference>
<dbReference type="Pfam" id="PF03485">
    <property type="entry name" value="Arg_tRNA_synt_N"/>
    <property type="match status" value="1"/>
</dbReference>
<dbReference type="Pfam" id="PF05746">
    <property type="entry name" value="DALR_1"/>
    <property type="match status" value="1"/>
</dbReference>
<dbReference type="Pfam" id="PF00750">
    <property type="entry name" value="tRNA-synt_1d"/>
    <property type="match status" value="1"/>
</dbReference>
<dbReference type="PRINTS" id="PR01038">
    <property type="entry name" value="TRNASYNTHARG"/>
</dbReference>
<dbReference type="SMART" id="SM01016">
    <property type="entry name" value="Arg_tRNA_synt_N"/>
    <property type="match status" value="1"/>
</dbReference>
<dbReference type="SMART" id="SM00836">
    <property type="entry name" value="DALR_1"/>
    <property type="match status" value="1"/>
</dbReference>
<dbReference type="SUPFAM" id="SSF47323">
    <property type="entry name" value="Anticodon-binding domain of a subclass of class I aminoacyl-tRNA synthetases"/>
    <property type="match status" value="1"/>
</dbReference>
<dbReference type="SUPFAM" id="SSF55190">
    <property type="entry name" value="Arginyl-tRNA synthetase (ArgRS), N-terminal 'additional' domain"/>
    <property type="match status" value="1"/>
</dbReference>
<dbReference type="SUPFAM" id="SSF52374">
    <property type="entry name" value="Nucleotidylyl transferase"/>
    <property type="match status" value="1"/>
</dbReference>
<dbReference type="PROSITE" id="PS00178">
    <property type="entry name" value="AA_TRNA_LIGASE_I"/>
    <property type="match status" value="1"/>
</dbReference>